<sequence length="234" mass="25748">MATLFTATVPSHHRFVSPSQHPKQSLLSQSLSVTFTENPQPTAVVTLQEQQLTDWITSPVTRRFGIGAGFTWAGFLAFGVVSEQMKKSRLDVFQEEDNTRGLEKQEEIILPNGIRYYDLQVGSGATPSSGYLVVFDVKGQVHGTEQVFVDTFGGKGKSLAMVMDSRPYSKGLCQGIEHVLRSMKAGGKRRVIIPPSLGFGDRNVEFGQGLEIPPSATLDYIIEVDTVYCFQTIV</sequence>
<proteinExistence type="evidence at transcript level"/>
<evidence type="ECO:0000250" key="1"/>
<evidence type="ECO:0000255" key="2"/>
<evidence type="ECO:0000255" key="3">
    <source>
        <dbReference type="PROSITE-ProRule" id="PRU00277"/>
    </source>
</evidence>
<evidence type="ECO:0000305" key="4"/>
<name>FK173_ARATH</name>
<feature type="transit peptide" description="Chloroplast" evidence="2">
    <location>
        <begin position="1"/>
        <end position="28"/>
    </location>
</feature>
<feature type="transit peptide" description="Thylakoid">
    <location>
        <begin position="29"/>
        <end status="unknown"/>
    </location>
</feature>
<feature type="chain" id="PRO_0000416133" description="Peptidyl-prolyl cis-trans isomerase FKBP17-3, chloroplastic">
    <location>
        <begin status="unknown"/>
        <end position="234"/>
    </location>
</feature>
<feature type="domain" description="PPIase FKBP-type" evidence="3">
    <location>
        <begin position="130"/>
        <end position="228"/>
    </location>
</feature>
<feature type="sequence conflict" description="In Ref. 1; AAG52066." evidence="4" ref="1">
    <original>R</original>
    <variation>K</variation>
    <location>
        <position position="190"/>
    </location>
</feature>
<reference key="1">
    <citation type="journal article" date="2000" name="Nature">
        <title>Sequence and analysis of chromosome 1 of the plant Arabidopsis thaliana.</title>
        <authorList>
            <person name="Theologis A."/>
            <person name="Ecker J.R."/>
            <person name="Palm C.J."/>
            <person name="Federspiel N.A."/>
            <person name="Kaul S."/>
            <person name="White O."/>
            <person name="Alonso J."/>
            <person name="Altafi H."/>
            <person name="Araujo R."/>
            <person name="Bowman C.L."/>
            <person name="Brooks S.Y."/>
            <person name="Buehler E."/>
            <person name="Chan A."/>
            <person name="Chao Q."/>
            <person name="Chen H."/>
            <person name="Cheuk R.F."/>
            <person name="Chin C.W."/>
            <person name="Chung M.K."/>
            <person name="Conn L."/>
            <person name="Conway A.B."/>
            <person name="Conway A.R."/>
            <person name="Creasy T.H."/>
            <person name="Dewar K."/>
            <person name="Dunn P."/>
            <person name="Etgu P."/>
            <person name="Feldblyum T.V."/>
            <person name="Feng J.-D."/>
            <person name="Fong B."/>
            <person name="Fujii C.Y."/>
            <person name="Gill J.E."/>
            <person name="Goldsmith A.D."/>
            <person name="Haas B."/>
            <person name="Hansen N.F."/>
            <person name="Hughes B."/>
            <person name="Huizar L."/>
            <person name="Hunter J.L."/>
            <person name="Jenkins J."/>
            <person name="Johnson-Hopson C."/>
            <person name="Khan S."/>
            <person name="Khaykin E."/>
            <person name="Kim C.J."/>
            <person name="Koo H.L."/>
            <person name="Kremenetskaia I."/>
            <person name="Kurtz D.B."/>
            <person name="Kwan A."/>
            <person name="Lam B."/>
            <person name="Langin-Hooper S."/>
            <person name="Lee A."/>
            <person name="Lee J.M."/>
            <person name="Lenz C.A."/>
            <person name="Li J.H."/>
            <person name="Li Y.-P."/>
            <person name="Lin X."/>
            <person name="Liu S.X."/>
            <person name="Liu Z.A."/>
            <person name="Luros J.S."/>
            <person name="Maiti R."/>
            <person name="Marziali A."/>
            <person name="Militscher J."/>
            <person name="Miranda M."/>
            <person name="Nguyen M."/>
            <person name="Nierman W.C."/>
            <person name="Osborne B.I."/>
            <person name="Pai G."/>
            <person name="Peterson J."/>
            <person name="Pham P.K."/>
            <person name="Rizzo M."/>
            <person name="Rooney T."/>
            <person name="Rowley D."/>
            <person name="Sakano H."/>
            <person name="Salzberg S.L."/>
            <person name="Schwartz J.R."/>
            <person name="Shinn P."/>
            <person name="Southwick A.M."/>
            <person name="Sun H."/>
            <person name="Tallon L.J."/>
            <person name="Tambunga G."/>
            <person name="Toriumi M.J."/>
            <person name="Town C.D."/>
            <person name="Utterback T."/>
            <person name="Van Aken S."/>
            <person name="Vaysberg M."/>
            <person name="Vysotskaia V.S."/>
            <person name="Walker M."/>
            <person name="Wu D."/>
            <person name="Yu G."/>
            <person name="Fraser C.M."/>
            <person name="Venter J.C."/>
            <person name="Davis R.W."/>
        </authorList>
    </citation>
    <scope>NUCLEOTIDE SEQUENCE [LARGE SCALE GENOMIC DNA]</scope>
    <source>
        <strain>cv. Columbia</strain>
    </source>
</reference>
<reference key="2">
    <citation type="journal article" date="2017" name="Plant J.">
        <title>Araport11: a complete reannotation of the Arabidopsis thaliana reference genome.</title>
        <authorList>
            <person name="Cheng C.Y."/>
            <person name="Krishnakumar V."/>
            <person name="Chan A.P."/>
            <person name="Thibaud-Nissen F."/>
            <person name="Schobel S."/>
            <person name="Town C.D."/>
        </authorList>
    </citation>
    <scope>GENOME REANNOTATION</scope>
    <source>
        <strain>cv. Columbia</strain>
    </source>
</reference>
<reference key="3">
    <citation type="journal article" date="2003" name="Science">
        <title>Empirical analysis of transcriptional activity in the Arabidopsis genome.</title>
        <authorList>
            <person name="Yamada K."/>
            <person name="Lim J."/>
            <person name="Dale J.M."/>
            <person name="Chen H."/>
            <person name="Shinn P."/>
            <person name="Palm C.J."/>
            <person name="Southwick A.M."/>
            <person name="Wu H.C."/>
            <person name="Kim C.J."/>
            <person name="Nguyen M."/>
            <person name="Pham P.K."/>
            <person name="Cheuk R.F."/>
            <person name="Karlin-Newmann G."/>
            <person name="Liu S.X."/>
            <person name="Lam B."/>
            <person name="Sakano H."/>
            <person name="Wu T."/>
            <person name="Yu G."/>
            <person name="Miranda M."/>
            <person name="Quach H.L."/>
            <person name="Tripp M."/>
            <person name="Chang C.H."/>
            <person name="Lee J.M."/>
            <person name="Toriumi M.J."/>
            <person name="Chan M.M."/>
            <person name="Tang C.C."/>
            <person name="Onodera C.S."/>
            <person name="Deng J.M."/>
            <person name="Akiyama K."/>
            <person name="Ansari Y."/>
            <person name="Arakawa T."/>
            <person name="Banh J."/>
            <person name="Banno F."/>
            <person name="Bowser L."/>
            <person name="Brooks S.Y."/>
            <person name="Carninci P."/>
            <person name="Chao Q."/>
            <person name="Choy N."/>
            <person name="Enju A."/>
            <person name="Goldsmith A.D."/>
            <person name="Gurjal M."/>
            <person name="Hansen N.F."/>
            <person name="Hayashizaki Y."/>
            <person name="Johnson-Hopson C."/>
            <person name="Hsuan V.W."/>
            <person name="Iida K."/>
            <person name="Karnes M."/>
            <person name="Khan S."/>
            <person name="Koesema E."/>
            <person name="Ishida J."/>
            <person name="Jiang P.X."/>
            <person name="Jones T."/>
            <person name="Kawai J."/>
            <person name="Kamiya A."/>
            <person name="Meyers C."/>
            <person name="Nakajima M."/>
            <person name="Narusaka M."/>
            <person name="Seki M."/>
            <person name="Sakurai T."/>
            <person name="Satou M."/>
            <person name="Tamse R."/>
            <person name="Vaysberg M."/>
            <person name="Wallender E.K."/>
            <person name="Wong C."/>
            <person name="Yamamura Y."/>
            <person name="Yuan S."/>
            <person name="Shinozaki K."/>
            <person name="Davis R.W."/>
            <person name="Theologis A."/>
            <person name="Ecker J.R."/>
        </authorList>
    </citation>
    <scope>NUCLEOTIDE SEQUENCE [LARGE SCALE MRNA]</scope>
    <source>
        <strain>cv. Columbia</strain>
    </source>
</reference>
<reference key="4">
    <citation type="submission" date="2005-03" db="EMBL/GenBank/DDBJ databases">
        <title>Arabidopsis ORF clones.</title>
        <authorList>
            <person name="Cheuk R."/>
            <person name="Chen H."/>
            <person name="Kim C.J."/>
            <person name="Shinn P."/>
            <person name="Ecker J.R."/>
        </authorList>
    </citation>
    <scope>NUCLEOTIDE SEQUENCE [LARGE SCALE MRNA]</scope>
    <source>
        <strain>cv. Columbia</strain>
    </source>
</reference>
<reference key="5">
    <citation type="submission" date="2002-03" db="EMBL/GenBank/DDBJ databases">
        <title>Full-length cDNA from Arabidopsis thaliana.</title>
        <authorList>
            <person name="Brover V.V."/>
            <person name="Troukhan M.E."/>
            <person name="Alexandrov N.A."/>
            <person name="Lu Y.-P."/>
            <person name="Flavell R.B."/>
            <person name="Feldmann K.A."/>
        </authorList>
    </citation>
    <scope>NUCLEOTIDE SEQUENCE [LARGE SCALE MRNA]</scope>
</reference>
<reference key="6">
    <citation type="journal article" date="2004" name="Plant Physiol.">
        <title>Immunophilins and parvulins. Superfamily of peptidyl prolyl isomerases in Arabidopsis.</title>
        <authorList>
            <person name="He Z."/>
            <person name="Li L."/>
            <person name="Luan S."/>
        </authorList>
    </citation>
    <scope>GENE FAMILY</scope>
    <scope>NOMENCLATURE</scope>
    <source>
        <strain>cv. Columbia</strain>
    </source>
</reference>
<dbReference type="EC" id="5.2.1.8"/>
<dbReference type="EMBL" id="AC012679">
    <property type="protein sequence ID" value="AAG52066.1"/>
    <property type="status" value="ALT_SEQ"/>
    <property type="molecule type" value="Genomic_DNA"/>
</dbReference>
<dbReference type="EMBL" id="CP002684">
    <property type="protein sequence ID" value="AEE35493.1"/>
    <property type="molecule type" value="Genomic_DNA"/>
</dbReference>
<dbReference type="EMBL" id="BT004233">
    <property type="protein sequence ID" value="AAO42248.1"/>
    <property type="molecule type" value="mRNA"/>
</dbReference>
<dbReference type="EMBL" id="BT020474">
    <property type="protein sequence ID" value="AAW38975.1"/>
    <property type="molecule type" value="mRNA"/>
</dbReference>
<dbReference type="EMBL" id="BT021144">
    <property type="protein sequence ID" value="AAX22279.1"/>
    <property type="molecule type" value="mRNA"/>
</dbReference>
<dbReference type="EMBL" id="AY087399">
    <property type="protein sequence ID" value="AAM64948.1"/>
    <property type="molecule type" value="mRNA"/>
</dbReference>
<dbReference type="PIR" id="E96763">
    <property type="entry name" value="E96763"/>
</dbReference>
<dbReference type="RefSeq" id="NP_565069.4">
    <property type="nucleotide sequence ID" value="NM_106024.6"/>
</dbReference>
<dbReference type="SMR" id="Q8LB65"/>
<dbReference type="FunCoup" id="Q8LB65">
    <property type="interactions" value="467"/>
</dbReference>
<dbReference type="STRING" id="3702.Q8LB65"/>
<dbReference type="GlyGen" id="Q8LB65">
    <property type="glycosylation" value="1 site"/>
</dbReference>
<dbReference type="PaxDb" id="3702-AT1G73655.1"/>
<dbReference type="ProteomicsDB" id="230842"/>
<dbReference type="EnsemblPlants" id="AT1G73655.1">
    <property type="protein sequence ID" value="AT1G73655.1"/>
    <property type="gene ID" value="AT1G73655"/>
</dbReference>
<dbReference type="GeneID" id="843700"/>
<dbReference type="Gramene" id="AT1G73655.1">
    <property type="protein sequence ID" value="AT1G73655.1"/>
    <property type="gene ID" value="AT1G73655"/>
</dbReference>
<dbReference type="KEGG" id="ath:AT1G73655"/>
<dbReference type="Araport" id="AT1G73655"/>
<dbReference type="TAIR" id="AT1G73655"/>
<dbReference type="eggNOG" id="KOG0552">
    <property type="taxonomic scope" value="Eukaryota"/>
</dbReference>
<dbReference type="HOGENOM" id="CLU_090476_0_0_1"/>
<dbReference type="InParanoid" id="Q8LB65"/>
<dbReference type="OMA" id="GICQGVE"/>
<dbReference type="OrthoDB" id="1902587at2759"/>
<dbReference type="PhylomeDB" id="Q8LB65"/>
<dbReference type="PRO" id="PR:Q8LB65"/>
<dbReference type="Proteomes" id="UP000006548">
    <property type="component" value="Chromosome 1"/>
</dbReference>
<dbReference type="ExpressionAtlas" id="Q8LB65">
    <property type="expression patterns" value="baseline and differential"/>
</dbReference>
<dbReference type="GO" id="GO:0009543">
    <property type="term" value="C:chloroplast thylakoid lumen"/>
    <property type="evidence" value="ECO:0007669"/>
    <property type="project" value="UniProtKB-SubCell"/>
</dbReference>
<dbReference type="GO" id="GO:0003755">
    <property type="term" value="F:peptidyl-prolyl cis-trans isomerase activity"/>
    <property type="evidence" value="ECO:0007669"/>
    <property type="project" value="UniProtKB-KW"/>
</dbReference>
<dbReference type="FunFam" id="3.10.50.40:FF:000037">
    <property type="entry name" value="Peptidylprolyl isomerase"/>
    <property type="match status" value="1"/>
</dbReference>
<dbReference type="Gene3D" id="3.10.50.40">
    <property type="match status" value="1"/>
</dbReference>
<dbReference type="InterPro" id="IPR053111">
    <property type="entry name" value="Chloro_FKBP-type_PPIase"/>
</dbReference>
<dbReference type="InterPro" id="IPR046357">
    <property type="entry name" value="PPIase_dom_sf"/>
</dbReference>
<dbReference type="InterPro" id="IPR001179">
    <property type="entry name" value="PPIase_FKBP_dom"/>
</dbReference>
<dbReference type="PANTHER" id="PTHR47598">
    <property type="entry name" value="PEPTIDYL-PROLYL CIS-TRANS ISOMERASE FKBP17-2, CHLOROPLASTIC"/>
    <property type="match status" value="1"/>
</dbReference>
<dbReference type="PANTHER" id="PTHR47598:SF2">
    <property type="entry name" value="PEPTIDYL-PROLYL CIS-TRANS ISOMERASE FKBP17-3, CHLOROPLASTIC"/>
    <property type="match status" value="1"/>
</dbReference>
<dbReference type="Pfam" id="PF00254">
    <property type="entry name" value="FKBP_C"/>
    <property type="match status" value="1"/>
</dbReference>
<dbReference type="SUPFAM" id="SSF54534">
    <property type="entry name" value="FKBP-like"/>
    <property type="match status" value="1"/>
</dbReference>
<dbReference type="PROSITE" id="PS50059">
    <property type="entry name" value="FKBP_PPIASE"/>
    <property type="match status" value="1"/>
</dbReference>
<comment type="function">
    <text evidence="1">PPIases accelerate the folding of proteins. It catalyzes the cis-trans isomerization of proline imidic peptide bonds in oligopeptides (By similarity).</text>
</comment>
<comment type="catalytic activity">
    <reaction>
        <text>[protein]-peptidylproline (omega=180) = [protein]-peptidylproline (omega=0)</text>
        <dbReference type="Rhea" id="RHEA:16237"/>
        <dbReference type="Rhea" id="RHEA-COMP:10747"/>
        <dbReference type="Rhea" id="RHEA-COMP:10748"/>
        <dbReference type="ChEBI" id="CHEBI:83833"/>
        <dbReference type="ChEBI" id="CHEBI:83834"/>
        <dbReference type="EC" id="5.2.1.8"/>
    </reaction>
</comment>
<comment type="subcellular location">
    <subcellularLocation>
        <location evidence="1">Plastid</location>
        <location evidence="1">Chloroplast thylakoid lumen</location>
    </subcellularLocation>
</comment>
<comment type="similarity">
    <text evidence="4">Belongs to the FKBP-type PPIase family.</text>
</comment>
<comment type="sequence caution" evidence="4">
    <conflict type="erroneous gene model prediction">
        <sequence resource="EMBL-CDS" id="AAG52066"/>
    </conflict>
</comment>
<accession>Q8LB65</accession>
<accession>Q9C9U6</accession>
<keyword id="KW-0150">Chloroplast</keyword>
<keyword id="KW-0413">Isomerase</keyword>
<keyword id="KW-0934">Plastid</keyword>
<keyword id="KW-1185">Reference proteome</keyword>
<keyword id="KW-0697">Rotamase</keyword>
<keyword id="KW-0793">Thylakoid</keyword>
<keyword id="KW-0809">Transit peptide</keyword>
<protein>
    <recommendedName>
        <fullName>Peptidyl-prolyl cis-trans isomerase FKBP17-3, chloroplastic</fullName>
        <shortName>PPIase FKBP17-3</shortName>
        <ecNumber>5.2.1.8</ecNumber>
    </recommendedName>
    <alternativeName>
        <fullName>FK506-binding protein 17-3</fullName>
        <shortName>AtFKBP17-3</shortName>
    </alternativeName>
    <alternativeName>
        <fullName>Immunophilin FKBP17-3</fullName>
    </alternativeName>
    <alternativeName>
        <fullName>Rotamase</fullName>
    </alternativeName>
</protein>
<organism>
    <name type="scientific">Arabidopsis thaliana</name>
    <name type="common">Mouse-ear cress</name>
    <dbReference type="NCBI Taxonomy" id="3702"/>
    <lineage>
        <taxon>Eukaryota</taxon>
        <taxon>Viridiplantae</taxon>
        <taxon>Streptophyta</taxon>
        <taxon>Embryophyta</taxon>
        <taxon>Tracheophyta</taxon>
        <taxon>Spermatophyta</taxon>
        <taxon>Magnoliopsida</taxon>
        <taxon>eudicotyledons</taxon>
        <taxon>Gunneridae</taxon>
        <taxon>Pentapetalae</taxon>
        <taxon>rosids</taxon>
        <taxon>malvids</taxon>
        <taxon>Brassicales</taxon>
        <taxon>Brassicaceae</taxon>
        <taxon>Camelineae</taxon>
        <taxon>Arabidopsis</taxon>
    </lineage>
</organism>
<gene>
    <name type="primary">FKBP17-3</name>
    <name type="ordered locus">At1g73655</name>
    <name type="ORF">F25P22.7</name>
</gene>